<reference key="1">
    <citation type="journal article" date="2003" name="J. Bacteriol.">
        <title>Comparative analyses of the complete genome sequences of Pierce's disease and citrus variegated chlorosis strains of Xylella fastidiosa.</title>
        <authorList>
            <person name="Van Sluys M.A."/>
            <person name="de Oliveira M.C."/>
            <person name="Monteiro-Vitorello C.B."/>
            <person name="Miyaki C.Y."/>
            <person name="Furlan L.R."/>
            <person name="Camargo L.E.A."/>
            <person name="da Silva A.C.R."/>
            <person name="Moon D.H."/>
            <person name="Takita M.A."/>
            <person name="Lemos E.G.M."/>
            <person name="Machado M.A."/>
            <person name="Ferro M.I.T."/>
            <person name="da Silva F.R."/>
            <person name="Goldman M.H.S."/>
            <person name="Goldman G.H."/>
            <person name="Lemos M.V.F."/>
            <person name="El-Dorry H."/>
            <person name="Tsai S.M."/>
            <person name="Carrer H."/>
            <person name="Carraro D.M."/>
            <person name="de Oliveira R.C."/>
            <person name="Nunes L.R."/>
            <person name="Siqueira W.J."/>
            <person name="Coutinho L.L."/>
            <person name="Kimura E.T."/>
            <person name="Ferro E.S."/>
            <person name="Harakava R."/>
            <person name="Kuramae E.E."/>
            <person name="Marino C.L."/>
            <person name="Giglioti E."/>
            <person name="Abreu I.L."/>
            <person name="Alves L.M.C."/>
            <person name="do Amaral A.M."/>
            <person name="Baia G.S."/>
            <person name="Blanco S.R."/>
            <person name="Brito M.S."/>
            <person name="Cannavan F.S."/>
            <person name="Celestino A.V."/>
            <person name="da Cunha A.F."/>
            <person name="Fenille R.C."/>
            <person name="Ferro J.A."/>
            <person name="Formighieri E.F."/>
            <person name="Kishi L.T."/>
            <person name="Leoni S.G."/>
            <person name="Oliveira A.R."/>
            <person name="Rosa V.E. Jr."/>
            <person name="Sassaki F.T."/>
            <person name="Sena J.A.D."/>
            <person name="de Souza A.A."/>
            <person name="Truffi D."/>
            <person name="Tsukumo F."/>
            <person name="Yanai G.M."/>
            <person name="Zaros L.G."/>
            <person name="Civerolo E.L."/>
            <person name="Simpson A.J.G."/>
            <person name="Almeida N.F. Jr."/>
            <person name="Setubal J.C."/>
            <person name="Kitajima J.P."/>
        </authorList>
    </citation>
    <scope>NUCLEOTIDE SEQUENCE [LARGE SCALE GENOMIC DNA]</scope>
    <source>
        <strain>Temecula1 / ATCC 700964</strain>
    </source>
</reference>
<comment type="function">
    <text evidence="1">Required for maturation of 30S ribosomal subunits.</text>
</comment>
<comment type="subcellular location">
    <subcellularLocation>
        <location evidence="1">Cytoplasm</location>
    </subcellularLocation>
</comment>
<comment type="similarity">
    <text evidence="1">Belongs to the RimP family.</text>
</comment>
<comment type="sequence caution" evidence="3">
    <conflict type="erroneous initiation">
        <sequence resource="EMBL-CDS" id="AAO28083"/>
    </conflict>
</comment>
<keyword id="KW-0963">Cytoplasm</keyword>
<keyword id="KW-1185">Reference proteome</keyword>
<keyword id="KW-0690">Ribosome biogenesis</keyword>
<organism>
    <name type="scientific">Xylella fastidiosa (strain Temecula1 / ATCC 700964)</name>
    <dbReference type="NCBI Taxonomy" id="183190"/>
    <lineage>
        <taxon>Bacteria</taxon>
        <taxon>Pseudomonadati</taxon>
        <taxon>Pseudomonadota</taxon>
        <taxon>Gammaproteobacteria</taxon>
        <taxon>Lysobacterales</taxon>
        <taxon>Lysobacteraceae</taxon>
        <taxon>Xylella</taxon>
    </lineage>
</organism>
<name>RIMP_XYLFT</name>
<feature type="chain" id="PRO_0000181957" description="Ribosome maturation factor RimP">
    <location>
        <begin position="1"/>
        <end position="199"/>
    </location>
</feature>
<feature type="region of interest" description="Disordered" evidence="2">
    <location>
        <begin position="170"/>
        <end position="199"/>
    </location>
</feature>
<feature type="compositionally biased region" description="Polar residues" evidence="2">
    <location>
        <begin position="177"/>
        <end position="189"/>
    </location>
</feature>
<protein>
    <recommendedName>
        <fullName evidence="1">Ribosome maturation factor RimP</fullName>
    </recommendedName>
</protein>
<dbReference type="EMBL" id="AE009442">
    <property type="protein sequence ID" value="AAO28083.1"/>
    <property type="status" value="ALT_INIT"/>
    <property type="molecule type" value="Genomic_DNA"/>
</dbReference>
<dbReference type="RefSeq" id="WP_012382428.1">
    <property type="nucleotide sequence ID" value="NC_004556.1"/>
</dbReference>
<dbReference type="SMR" id="Q87EV6"/>
<dbReference type="DNASU" id="1144404"/>
<dbReference type="GeneID" id="93903883"/>
<dbReference type="KEGG" id="xft:PD_0192"/>
<dbReference type="HOGENOM" id="CLU_070525_1_1_6"/>
<dbReference type="Proteomes" id="UP000002516">
    <property type="component" value="Chromosome"/>
</dbReference>
<dbReference type="GO" id="GO:0005829">
    <property type="term" value="C:cytosol"/>
    <property type="evidence" value="ECO:0007669"/>
    <property type="project" value="TreeGrafter"/>
</dbReference>
<dbReference type="GO" id="GO:0000028">
    <property type="term" value="P:ribosomal small subunit assembly"/>
    <property type="evidence" value="ECO:0007669"/>
    <property type="project" value="TreeGrafter"/>
</dbReference>
<dbReference type="GO" id="GO:0006412">
    <property type="term" value="P:translation"/>
    <property type="evidence" value="ECO:0007669"/>
    <property type="project" value="TreeGrafter"/>
</dbReference>
<dbReference type="CDD" id="cd01734">
    <property type="entry name" value="YlxS_C"/>
    <property type="match status" value="1"/>
</dbReference>
<dbReference type="FunFam" id="3.30.300.70:FF:000001">
    <property type="entry name" value="Ribosome maturation factor RimP"/>
    <property type="match status" value="1"/>
</dbReference>
<dbReference type="Gene3D" id="3.30.300.70">
    <property type="entry name" value="RimP-like superfamily, N-terminal"/>
    <property type="match status" value="1"/>
</dbReference>
<dbReference type="HAMAP" id="MF_01077">
    <property type="entry name" value="RimP"/>
    <property type="match status" value="1"/>
</dbReference>
<dbReference type="InterPro" id="IPR003728">
    <property type="entry name" value="Ribosome_maturation_RimP"/>
</dbReference>
<dbReference type="InterPro" id="IPR028998">
    <property type="entry name" value="RimP_C"/>
</dbReference>
<dbReference type="InterPro" id="IPR036847">
    <property type="entry name" value="RimP_C_sf"/>
</dbReference>
<dbReference type="InterPro" id="IPR028989">
    <property type="entry name" value="RimP_N"/>
</dbReference>
<dbReference type="InterPro" id="IPR035956">
    <property type="entry name" value="RimP_N_sf"/>
</dbReference>
<dbReference type="NCBIfam" id="NF000931">
    <property type="entry name" value="PRK00092.2-3"/>
    <property type="match status" value="1"/>
</dbReference>
<dbReference type="PANTHER" id="PTHR33867">
    <property type="entry name" value="RIBOSOME MATURATION FACTOR RIMP"/>
    <property type="match status" value="1"/>
</dbReference>
<dbReference type="PANTHER" id="PTHR33867:SF1">
    <property type="entry name" value="RIBOSOME MATURATION FACTOR RIMP"/>
    <property type="match status" value="1"/>
</dbReference>
<dbReference type="Pfam" id="PF17384">
    <property type="entry name" value="DUF150_C"/>
    <property type="match status" value="1"/>
</dbReference>
<dbReference type="Pfam" id="PF02576">
    <property type="entry name" value="RimP_N"/>
    <property type="match status" value="1"/>
</dbReference>
<dbReference type="SUPFAM" id="SSF74942">
    <property type="entry name" value="YhbC-like, C-terminal domain"/>
    <property type="match status" value="1"/>
</dbReference>
<dbReference type="SUPFAM" id="SSF75420">
    <property type="entry name" value="YhbC-like, N-terminal domain"/>
    <property type="match status" value="1"/>
</dbReference>
<proteinExistence type="inferred from homology"/>
<sequence>MSDKGIEIVNLLAPKVEMLGFDLLGAEYLLVPSGAILRLYIDIPFAMQPECMVSIDDCERVSREVSAYLDLEEPISGNYTLEVSSPGLDRRLFTLEQFARHHNHLVKVGLKLQQHGSRRLQGKIVRVEQVGGFVVLLVNGVELAVDFNNIDKARIVPDWSALGLAPLEKSKHDTKKMSQGSKKPSNESAARQAVRGVIR</sequence>
<evidence type="ECO:0000255" key="1">
    <source>
        <dbReference type="HAMAP-Rule" id="MF_01077"/>
    </source>
</evidence>
<evidence type="ECO:0000256" key="2">
    <source>
        <dbReference type="SAM" id="MobiDB-lite"/>
    </source>
</evidence>
<evidence type="ECO:0000305" key="3"/>
<gene>
    <name evidence="1" type="primary">rimP</name>
    <name type="ordered locus">PD_0192</name>
</gene>
<accession>Q87EV6</accession>